<proteinExistence type="evidence at protein level"/>
<sequence>MHELFNKVLAKRDLSRAGDLFSVPDADIVDDITEVLSEISPIISHADYVKNNNDQSVVEICVTRVLSCIRETKTAERYCAALVDLLRTCLLWNLQPSGTTKEEPPHAKIAADIISSIFLNYDKKELMKIALPVAVQFLPKGNRELSRNLASYLSLAAIDHAGLLSPHTESVMESILSGNYGLLRVLSQVYEVAPEAVTPHAPLLMPLLPQCDPQERMAVFQLYLLIVQKSPEVLESCVPQLCGSLLDSDTSSITMQILLKLSQHSPSLLVDHFEQLRLAAKTNPGTIPLCAQIMTTAGIGSKETAQQALDFVLEHLPTQALLQQEATRLCSAYPVLFTDKVLACVRQKNAALSSQQDVGNGLANKTSGGVTIVSLNSSSPSPPLKPVPVGAPAINTTIVQPASVVSATPTPPPSSASAPIASSTPVSAATPTPQHAGYTRRVKLGDSRSTGRLHPASNTHRSVTRLNVASGSVGGLHKSMTRLSNSQINQQPGGSSNGNVVVQSGATPKTPTGLSNPPVTPVPPLSNNVVITGHNRHGIPVTSGGVTVTTSPSKVRPHSQGPSTLLNSSTVLMKYSTDALNQSVGSISIPQSAAVATLPSTQTQNAVSVHHASPALPQSASNGHAKSVMKLPVNGNSEVIVSGPTTNVAPRRSDNTSRTLLNANSVMDQRMSTFEPYQIMRDPVQQFCEKNFNSIKSYMDEVSQHLPPPTRCSIEVSNEFAERRTKKVAKLHFACQIRGPHCLYSKTCFTMRTRNPKTWIHMMFLDFQVRHFVKEKCVLSTRESGISNLKNIWQILKCENRSFTELVTSQFPQVKDREILVNELRHSGFLDVFEVSKTDKSNPNCNELEYQWGCFLCNHPDKAVGFLNGSNQPMIEGQLKEKKGKWRLFRRWRTRYFTLSGAHLSCKGSSGGESIDVNQIRSVKVSRGARNIPKAFEIFTADQTLILKPKDGKNAEEWVQCLSIVVAHSQARDNPTAKTNSLPARSIGSSKPSF</sequence>
<gene>
    <name type="primary">melt</name>
    <name type="ORF">CG8624</name>
</gene>
<protein>
    <recommendedName>
        <fullName>Protein melted</fullName>
    </recommendedName>
</protein>
<evidence type="ECO:0000255" key="1">
    <source>
        <dbReference type="PROSITE-ProRule" id="PRU00145"/>
    </source>
</evidence>
<evidence type="ECO:0000256" key="2">
    <source>
        <dbReference type="SAM" id="MobiDB-lite"/>
    </source>
</evidence>
<evidence type="ECO:0000269" key="3">
    <source>
    </source>
</evidence>
<evidence type="ECO:0000269" key="4">
    <source>
    </source>
</evidence>
<evidence type="ECO:0000269" key="5">
    <source>
    </source>
</evidence>
<evidence type="ECO:0000305" key="6"/>
<organism>
    <name type="scientific">Drosophila melanogaster</name>
    <name type="common">Fruit fly</name>
    <dbReference type="NCBI Taxonomy" id="7227"/>
    <lineage>
        <taxon>Eukaryota</taxon>
        <taxon>Metazoa</taxon>
        <taxon>Ecdysozoa</taxon>
        <taxon>Arthropoda</taxon>
        <taxon>Hexapoda</taxon>
        <taxon>Insecta</taxon>
        <taxon>Pterygota</taxon>
        <taxon>Neoptera</taxon>
        <taxon>Endopterygota</taxon>
        <taxon>Diptera</taxon>
        <taxon>Brachycera</taxon>
        <taxon>Muscomorpha</taxon>
        <taxon>Ephydroidea</taxon>
        <taxon>Drosophilidae</taxon>
        <taxon>Drosophila</taxon>
        <taxon>Sophophora</taxon>
    </lineage>
</organism>
<dbReference type="EMBL" id="AE014296">
    <property type="protein sequence ID" value="AAF50606.2"/>
    <property type="molecule type" value="Genomic_DNA"/>
</dbReference>
<dbReference type="EMBL" id="AE014296">
    <property type="protein sequence ID" value="AAX52758.1"/>
    <property type="molecule type" value="Genomic_DNA"/>
</dbReference>
<dbReference type="EMBL" id="BT029129">
    <property type="protein sequence ID" value="ABJ17062.1"/>
    <property type="molecule type" value="mRNA"/>
</dbReference>
<dbReference type="EMBL" id="AF205831">
    <property type="protein sequence ID" value="AAF14808.1"/>
    <property type="molecule type" value="mRNA"/>
</dbReference>
<dbReference type="RefSeq" id="NP_001014572.1">
    <molecule id="Q9VS24-2"/>
    <property type="nucleotide sequence ID" value="NM_001014572.4"/>
</dbReference>
<dbReference type="RefSeq" id="NP_523953.2">
    <molecule id="Q9VS24-3"/>
    <property type="nucleotide sequence ID" value="NM_079229.4"/>
</dbReference>
<dbReference type="BioGRID" id="64230">
    <property type="interactions" value="13"/>
</dbReference>
<dbReference type="FunCoup" id="Q9VS24">
    <property type="interactions" value="62"/>
</dbReference>
<dbReference type="STRING" id="7227.FBpp0291254"/>
<dbReference type="GlyGen" id="Q9VS24">
    <property type="glycosylation" value="2 sites"/>
</dbReference>
<dbReference type="PaxDb" id="7227-FBpp0291254"/>
<dbReference type="DNASU" id="38785"/>
<dbReference type="EnsemblMetazoa" id="FBtr0100141">
    <molecule id="Q9VS24-2"/>
    <property type="protein sequence ID" value="FBpp0099491"/>
    <property type="gene ID" value="FBgn0023001"/>
</dbReference>
<dbReference type="EnsemblMetazoa" id="FBtr0302044">
    <molecule id="Q9VS24-3"/>
    <property type="protein sequence ID" value="FBpp0291254"/>
    <property type="gene ID" value="FBgn0023001"/>
</dbReference>
<dbReference type="GeneID" id="38785"/>
<dbReference type="KEGG" id="dme:Dmel_CG8624"/>
<dbReference type="UCSC" id="CG8624-RA">
    <molecule id="Q9VS24-3"/>
    <property type="organism name" value="d. melanogaster"/>
</dbReference>
<dbReference type="AGR" id="FB:FBgn0023001"/>
<dbReference type="CTD" id="38785"/>
<dbReference type="FlyBase" id="FBgn0023001">
    <property type="gene designation" value="melt"/>
</dbReference>
<dbReference type="VEuPathDB" id="VectorBase:FBgn0023001"/>
<dbReference type="eggNOG" id="KOG3723">
    <property type="taxonomic scope" value="Eukaryota"/>
</dbReference>
<dbReference type="GeneTree" id="ENSGT00390000018660"/>
<dbReference type="InParanoid" id="Q9VS24"/>
<dbReference type="OMA" id="WIRIMLL"/>
<dbReference type="OrthoDB" id="5869902at2759"/>
<dbReference type="PhylomeDB" id="Q9VS24"/>
<dbReference type="BioGRID-ORCS" id="38785">
    <property type="hits" value="0 hits in 1 CRISPR screen"/>
</dbReference>
<dbReference type="GenomeRNAi" id="38785"/>
<dbReference type="PRO" id="PR:Q9VS24"/>
<dbReference type="Proteomes" id="UP000000803">
    <property type="component" value="Chromosome 3L"/>
</dbReference>
<dbReference type="Bgee" id="FBgn0023001">
    <property type="expression patterns" value="Expressed in adult Malpighian tubule stellate cell of main segment in Malpighian tubule and 92 other cell types or tissues"/>
</dbReference>
<dbReference type="ExpressionAtlas" id="Q9VS24">
    <property type="expression patterns" value="baseline and differential"/>
</dbReference>
<dbReference type="GO" id="GO:0005886">
    <property type="term" value="C:plasma membrane"/>
    <property type="evidence" value="ECO:0000314"/>
    <property type="project" value="UniProtKB"/>
</dbReference>
<dbReference type="GO" id="GO:0140313">
    <property type="term" value="F:molecular sequestering activity"/>
    <property type="evidence" value="ECO:0000315"/>
    <property type="project" value="FlyBase"/>
</dbReference>
<dbReference type="GO" id="GO:0035091">
    <property type="term" value="F:phosphatidylinositol binding"/>
    <property type="evidence" value="ECO:0000314"/>
    <property type="project" value="FlyBase"/>
</dbReference>
<dbReference type="GO" id="GO:0010314">
    <property type="term" value="F:phosphatidylinositol-5-phosphate binding"/>
    <property type="evidence" value="ECO:0000314"/>
    <property type="project" value="FlyBase"/>
</dbReference>
<dbReference type="GO" id="GO:0001708">
    <property type="term" value="P:cell fate specification"/>
    <property type="evidence" value="ECO:0000315"/>
    <property type="project" value="FlyBase"/>
</dbReference>
<dbReference type="GO" id="GO:0009267">
    <property type="term" value="P:cellular response to starvation"/>
    <property type="evidence" value="ECO:0000315"/>
    <property type="project" value="FlyBase"/>
</dbReference>
<dbReference type="GO" id="GO:0006629">
    <property type="term" value="P:lipid metabolic process"/>
    <property type="evidence" value="ECO:0007669"/>
    <property type="project" value="UniProtKB-KW"/>
</dbReference>
<dbReference type="GO" id="GO:0046628">
    <property type="term" value="P:positive regulation of insulin receptor signaling pathway"/>
    <property type="evidence" value="ECO:0000315"/>
    <property type="project" value="FlyBase"/>
</dbReference>
<dbReference type="GO" id="GO:1904263">
    <property type="term" value="P:positive regulation of TORC1 signaling"/>
    <property type="evidence" value="ECO:0000315"/>
    <property type="project" value="FlyBase"/>
</dbReference>
<dbReference type="GO" id="GO:0045464">
    <property type="term" value="P:R8 cell fate specification"/>
    <property type="evidence" value="ECO:0000315"/>
    <property type="project" value="FlyBase"/>
</dbReference>
<dbReference type="GO" id="GO:0009966">
    <property type="term" value="P:regulation of signal transduction"/>
    <property type="evidence" value="ECO:0000318"/>
    <property type="project" value="GO_Central"/>
</dbReference>
<dbReference type="CDD" id="cd01264">
    <property type="entry name" value="PH_MELT_VEPH1"/>
    <property type="match status" value="1"/>
</dbReference>
<dbReference type="FunFam" id="2.30.29.30:FF:000138">
    <property type="entry name" value="Ventricular zone-expressed PH domain-containing protein-like 1"/>
    <property type="match status" value="1"/>
</dbReference>
<dbReference type="Gene3D" id="2.30.29.30">
    <property type="entry name" value="Pleckstrin-homology domain (PH domain)/Phosphotyrosine-binding domain (PTB)"/>
    <property type="match status" value="1"/>
</dbReference>
<dbReference type="InterPro" id="IPR016024">
    <property type="entry name" value="ARM-type_fold"/>
</dbReference>
<dbReference type="InterPro" id="IPR039888">
    <property type="entry name" value="Melted-like"/>
</dbReference>
<dbReference type="InterPro" id="IPR011993">
    <property type="entry name" value="PH-like_dom_sf"/>
</dbReference>
<dbReference type="InterPro" id="IPR001849">
    <property type="entry name" value="PH_domain"/>
</dbReference>
<dbReference type="PANTHER" id="PTHR21630:SF10">
    <property type="entry name" value="VENTRICULAR ZONE-EXPRESSED PH DOMAIN-CONTAINING PROTEIN HOMOLOG 1"/>
    <property type="match status" value="1"/>
</dbReference>
<dbReference type="PANTHER" id="PTHR21630">
    <property type="entry name" value="VEPH-A/MELTED"/>
    <property type="match status" value="1"/>
</dbReference>
<dbReference type="Pfam" id="PF00169">
    <property type="entry name" value="PH"/>
    <property type="match status" value="1"/>
</dbReference>
<dbReference type="SMART" id="SM00233">
    <property type="entry name" value="PH"/>
    <property type="match status" value="1"/>
</dbReference>
<dbReference type="SUPFAM" id="SSF48371">
    <property type="entry name" value="ARM repeat"/>
    <property type="match status" value="1"/>
</dbReference>
<dbReference type="SUPFAM" id="SSF50729">
    <property type="entry name" value="PH domain-like"/>
    <property type="match status" value="1"/>
</dbReference>
<dbReference type="PROSITE" id="PS50003">
    <property type="entry name" value="PH_DOMAIN"/>
    <property type="match status" value="1"/>
</dbReference>
<feature type="chain" id="PRO_0000297961" description="Protein melted">
    <location>
        <begin position="1"/>
        <end position="994"/>
    </location>
</feature>
<feature type="domain" description="PH" evidence="1">
    <location>
        <begin position="872"/>
        <end position="967"/>
    </location>
</feature>
<feature type="region of interest" description="Disordered" evidence="2">
    <location>
        <begin position="404"/>
        <end position="461"/>
    </location>
</feature>
<feature type="region of interest" description="Disordered" evidence="2">
    <location>
        <begin position="486"/>
        <end position="521"/>
    </location>
</feature>
<feature type="region of interest" description="Disordered" evidence="2">
    <location>
        <begin position="536"/>
        <end position="565"/>
    </location>
</feature>
<feature type="region of interest" description="Disordered" evidence="2">
    <location>
        <begin position="973"/>
        <end position="994"/>
    </location>
</feature>
<feature type="compositionally biased region" description="Low complexity" evidence="2">
    <location>
        <begin position="415"/>
        <end position="433"/>
    </location>
</feature>
<feature type="compositionally biased region" description="Polar residues" evidence="2">
    <location>
        <begin position="486"/>
        <end position="517"/>
    </location>
</feature>
<feature type="compositionally biased region" description="Low complexity" evidence="2">
    <location>
        <begin position="540"/>
        <end position="553"/>
    </location>
</feature>
<feature type="splice variant" id="VSP_027438" description="In isoform B." evidence="6">
    <location>
        <begin position="716"/>
        <end position="721"/>
    </location>
</feature>
<feature type="sequence conflict" description="In Ref. 4; AAF14808." evidence="6" ref="4">
    <original>V</original>
    <variation>A</variation>
    <location>
        <position position="405"/>
    </location>
</feature>
<feature type="sequence conflict" description="In Ref. 4; AAF14808." evidence="6" ref="4">
    <original>S</original>
    <variation>A</variation>
    <location>
        <position position="414"/>
    </location>
</feature>
<keyword id="KW-0025">Alternative splicing</keyword>
<keyword id="KW-1003">Cell membrane</keyword>
<keyword id="KW-0217">Developmental protein</keyword>
<keyword id="KW-0443">Lipid metabolism</keyword>
<keyword id="KW-0472">Membrane</keyword>
<keyword id="KW-1185">Reference proteome</keyword>
<comment type="function">
    <text evidence="3 4 5">Participates in fat metabolism regulation by recruiting FOXO and the TSC1-TSC2 complex to the cell membrane, which positively regulates TOR activity and negatively regulates the expression of FOXO target genes. Involved in R8 photoreceptor subtype specification. During early embryonic development, may be required for ectodermal patterning.</text>
</comment>
<comment type="subunit">
    <text evidence="4">Interacts with TSC1 and FOXO.</text>
</comment>
<comment type="subcellular location">
    <subcellularLocation>
        <location evidence="4">Cell membrane</location>
        <topology evidence="4">Peripheral membrane protein</topology>
        <orientation evidence="4">Cytoplasmic side</orientation>
    </subcellularLocation>
</comment>
<comment type="alternative products">
    <event type="alternative splicing"/>
    <isoform>
        <id>Q9VS24-3</id>
        <name>C</name>
        <sequence type="displayed"/>
    </isoform>
    <isoform>
        <id>Q9VS24-2</id>
        <name>B</name>
        <sequence type="described" ref="VSP_027438"/>
    </isoform>
</comment>
<comment type="domain">
    <text>The PH domain is required for membrane targeting.</text>
</comment>
<comment type="similarity">
    <text evidence="6">Belongs to the MELT/VEPH family.</text>
</comment>
<reference key="1">
    <citation type="journal article" date="2000" name="Science">
        <title>The genome sequence of Drosophila melanogaster.</title>
        <authorList>
            <person name="Adams M.D."/>
            <person name="Celniker S.E."/>
            <person name="Holt R.A."/>
            <person name="Evans C.A."/>
            <person name="Gocayne J.D."/>
            <person name="Amanatides P.G."/>
            <person name="Scherer S.E."/>
            <person name="Li P.W."/>
            <person name="Hoskins R.A."/>
            <person name="Galle R.F."/>
            <person name="George R.A."/>
            <person name="Lewis S.E."/>
            <person name="Richards S."/>
            <person name="Ashburner M."/>
            <person name="Henderson S.N."/>
            <person name="Sutton G.G."/>
            <person name="Wortman J.R."/>
            <person name="Yandell M.D."/>
            <person name="Zhang Q."/>
            <person name="Chen L.X."/>
            <person name="Brandon R.C."/>
            <person name="Rogers Y.-H.C."/>
            <person name="Blazej R.G."/>
            <person name="Champe M."/>
            <person name="Pfeiffer B.D."/>
            <person name="Wan K.H."/>
            <person name="Doyle C."/>
            <person name="Baxter E.G."/>
            <person name="Helt G."/>
            <person name="Nelson C.R."/>
            <person name="Miklos G.L.G."/>
            <person name="Abril J.F."/>
            <person name="Agbayani A."/>
            <person name="An H.-J."/>
            <person name="Andrews-Pfannkoch C."/>
            <person name="Baldwin D."/>
            <person name="Ballew R.M."/>
            <person name="Basu A."/>
            <person name="Baxendale J."/>
            <person name="Bayraktaroglu L."/>
            <person name="Beasley E.M."/>
            <person name="Beeson K.Y."/>
            <person name="Benos P.V."/>
            <person name="Berman B.P."/>
            <person name="Bhandari D."/>
            <person name="Bolshakov S."/>
            <person name="Borkova D."/>
            <person name="Botchan M.R."/>
            <person name="Bouck J."/>
            <person name="Brokstein P."/>
            <person name="Brottier P."/>
            <person name="Burtis K.C."/>
            <person name="Busam D.A."/>
            <person name="Butler H."/>
            <person name="Cadieu E."/>
            <person name="Center A."/>
            <person name="Chandra I."/>
            <person name="Cherry J.M."/>
            <person name="Cawley S."/>
            <person name="Dahlke C."/>
            <person name="Davenport L.B."/>
            <person name="Davies P."/>
            <person name="de Pablos B."/>
            <person name="Delcher A."/>
            <person name="Deng Z."/>
            <person name="Mays A.D."/>
            <person name="Dew I."/>
            <person name="Dietz S.M."/>
            <person name="Dodson K."/>
            <person name="Doup L.E."/>
            <person name="Downes M."/>
            <person name="Dugan-Rocha S."/>
            <person name="Dunkov B.C."/>
            <person name="Dunn P."/>
            <person name="Durbin K.J."/>
            <person name="Evangelista C.C."/>
            <person name="Ferraz C."/>
            <person name="Ferriera S."/>
            <person name="Fleischmann W."/>
            <person name="Fosler C."/>
            <person name="Gabrielian A.E."/>
            <person name="Garg N.S."/>
            <person name="Gelbart W.M."/>
            <person name="Glasser K."/>
            <person name="Glodek A."/>
            <person name="Gong F."/>
            <person name="Gorrell J.H."/>
            <person name="Gu Z."/>
            <person name="Guan P."/>
            <person name="Harris M."/>
            <person name="Harris N.L."/>
            <person name="Harvey D.A."/>
            <person name="Heiman T.J."/>
            <person name="Hernandez J.R."/>
            <person name="Houck J."/>
            <person name="Hostin D."/>
            <person name="Houston K.A."/>
            <person name="Howland T.J."/>
            <person name="Wei M.-H."/>
            <person name="Ibegwam C."/>
            <person name="Jalali M."/>
            <person name="Kalush F."/>
            <person name="Karpen G.H."/>
            <person name="Ke Z."/>
            <person name="Kennison J.A."/>
            <person name="Ketchum K.A."/>
            <person name="Kimmel B.E."/>
            <person name="Kodira C.D."/>
            <person name="Kraft C.L."/>
            <person name="Kravitz S."/>
            <person name="Kulp D."/>
            <person name="Lai Z."/>
            <person name="Lasko P."/>
            <person name="Lei Y."/>
            <person name="Levitsky A.A."/>
            <person name="Li J.H."/>
            <person name="Li Z."/>
            <person name="Liang Y."/>
            <person name="Lin X."/>
            <person name="Liu X."/>
            <person name="Mattei B."/>
            <person name="McIntosh T.C."/>
            <person name="McLeod M.P."/>
            <person name="McPherson D."/>
            <person name="Merkulov G."/>
            <person name="Milshina N.V."/>
            <person name="Mobarry C."/>
            <person name="Morris J."/>
            <person name="Moshrefi A."/>
            <person name="Mount S.M."/>
            <person name="Moy M."/>
            <person name="Murphy B."/>
            <person name="Murphy L."/>
            <person name="Muzny D.M."/>
            <person name="Nelson D.L."/>
            <person name="Nelson D.R."/>
            <person name="Nelson K.A."/>
            <person name="Nixon K."/>
            <person name="Nusskern D.R."/>
            <person name="Pacleb J.M."/>
            <person name="Palazzolo M."/>
            <person name="Pittman G.S."/>
            <person name="Pan S."/>
            <person name="Pollard J."/>
            <person name="Puri V."/>
            <person name="Reese M.G."/>
            <person name="Reinert K."/>
            <person name="Remington K."/>
            <person name="Saunders R.D.C."/>
            <person name="Scheeler F."/>
            <person name="Shen H."/>
            <person name="Shue B.C."/>
            <person name="Siden-Kiamos I."/>
            <person name="Simpson M."/>
            <person name="Skupski M.P."/>
            <person name="Smith T.J."/>
            <person name="Spier E."/>
            <person name="Spradling A.C."/>
            <person name="Stapleton M."/>
            <person name="Strong R."/>
            <person name="Sun E."/>
            <person name="Svirskas R."/>
            <person name="Tector C."/>
            <person name="Turner R."/>
            <person name="Venter E."/>
            <person name="Wang A.H."/>
            <person name="Wang X."/>
            <person name="Wang Z.-Y."/>
            <person name="Wassarman D.A."/>
            <person name="Weinstock G.M."/>
            <person name="Weissenbach J."/>
            <person name="Williams S.M."/>
            <person name="Woodage T."/>
            <person name="Worley K.C."/>
            <person name="Wu D."/>
            <person name="Yang S."/>
            <person name="Yao Q.A."/>
            <person name="Ye J."/>
            <person name="Yeh R.-F."/>
            <person name="Zaveri J.S."/>
            <person name="Zhan M."/>
            <person name="Zhang G."/>
            <person name="Zhao Q."/>
            <person name="Zheng L."/>
            <person name="Zheng X.H."/>
            <person name="Zhong F.N."/>
            <person name="Zhong W."/>
            <person name="Zhou X."/>
            <person name="Zhu S.C."/>
            <person name="Zhu X."/>
            <person name="Smith H.O."/>
            <person name="Gibbs R.A."/>
            <person name="Myers E.W."/>
            <person name="Rubin G.M."/>
            <person name="Venter J.C."/>
        </authorList>
    </citation>
    <scope>NUCLEOTIDE SEQUENCE [LARGE SCALE GENOMIC DNA]</scope>
    <source>
        <strain>Berkeley</strain>
    </source>
</reference>
<reference key="2">
    <citation type="journal article" date="2002" name="Genome Biol.">
        <title>Annotation of the Drosophila melanogaster euchromatic genome: a systematic review.</title>
        <authorList>
            <person name="Misra S."/>
            <person name="Crosby M.A."/>
            <person name="Mungall C.J."/>
            <person name="Matthews B.B."/>
            <person name="Campbell K.S."/>
            <person name="Hradecky P."/>
            <person name="Huang Y."/>
            <person name="Kaminker J.S."/>
            <person name="Millburn G.H."/>
            <person name="Prochnik S.E."/>
            <person name="Smith C.D."/>
            <person name="Tupy J.L."/>
            <person name="Whitfield E.J."/>
            <person name="Bayraktaroglu L."/>
            <person name="Berman B.P."/>
            <person name="Bettencourt B.R."/>
            <person name="Celniker S.E."/>
            <person name="de Grey A.D.N.J."/>
            <person name="Drysdale R.A."/>
            <person name="Harris N.L."/>
            <person name="Richter J."/>
            <person name="Russo S."/>
            <person name="Schroeder A.J."/>
            <person name="Shu S.Q."/>
            <person name="Stapleton M."/>
            <person name="Yamada C."/>
            <person name="Ashburner M."/>
            <person name="Gelbart W.M."/>
            <person name="Rubin G.M."/>
            <person name="Lewis S.E."/>
        </authorList>
    </citation>
    <scope>GENOME REANNOTATION</scope>
    <scope>ALTERNATIVE SPLICING (ISOFORM B)</scope>
    <source>
        <strain>Berkeley</strain>
    </source>
</reference>
<reference key="3">
    <citation type="submission" date="2006-10" db="EMBL/GenBank/DDBJ databases">
        <authorList>
            <person name="Stapleton M."/>
            <person name="Carlson J.W."/>
            <person name="Frise E."/>
            <person name="Kapadia B."/>
            <person name="Park S."/>
            <person name="Wan K.H."/>
            <person name="Yu C."/>
            <person name="Celniker S.E."/>
        </authorList>
    </citation>
    <scope>NUCLEOTIDE SEQUENCE [LARGE SCALE MRNA] (ISOFORM C)</scope>
    <source>
        <strain>Berkeley</strain>
    </source>
</reference>
<reference key="4">
    <citation type="journal article" date="2000" name="Genetics">
        <title>Mutations affecting the development of the peripheral nervous system in Drosophila: a molecular screen for novel proteins.</title>
        <authorList>
            <person name="Prokopenko S.N."/>
            <person name="He Y."/>
            <person name="Lu Y."/>
            <person name="Bellen H.J."/>
        </authorList>
    </citation>
    <scope>NUCLEOTIDE SEQUENCE [MRNA] OF 1-717 (ISOFORM C)</scope>
    <scope>FUNCTION</scope>
</reference>
<reference key="5">
    <citation type="journal article" date="2005" name="Cell">
        <title>The growth regulators warts/lats and melted interact in a bistable loop to specify opposite fates in Drosophila R8 photoreceptors.</title>
        <authorList>
            <person name="Mikeladze-Dvali T."/>
            <person name="Wernet M.F."/>
            <person name="Pistillo D."/>
            <person name="Mazzoni E.O."/>
            <person name="Teleman A.A."/>
            <person name="Chen Y.-W."/>
            <person name="Cohen S."/>
            <person name="Desplan C."/>
        </authorList>
    </citation>
    <scope>FUNCTION</scope>
</reference>
<reference key="6">
    <citation type="journal article" date="2005" name="Dev. Cell">
        <title>Drosophila Melted modulates FOXO and TOR activity.</title>
        <authorList>
            <person name="Teleman A.A."/>
            <person name="Chen Y.-W."/>
            <person name="Cohen S.M."/>
        </authorList>
    </citation>
    <scope>FUNCTION</scope>
    <scope>SUBCELLULAR LOCATION</scope>
    <scope>INTERACTION WITH TSC1 AND FOXO</scope>
</reference>
<accession>Q9VS24</accession>
<accession>Q058T9</accession>
<accession>Q59E21</accession>
<accession>Q9U422</accession>
<name>MELT_DROME</name>